<comment type="function">
    <text evidence="1">Required for the formation of a threonylcarbamoyl group on adenosine at position 37 (t(6)A37) in tRNAs that read codons beginning with adenine. Is involved in the transfer of the threonylcarbamoyl moiety of threonylcarbamoyl-AMP (TC-AMP) to the N6 group of A37, together with TsaE and TsaB. TsaD likely plays a direct catalytic role in this reaction.</text>
</comment>
<comment type="catalytic activity">
    <reaction evidence="1">
        <text>L-threonylcarbamoyladenylate + adenosine(37) in tRNA = N(6)-L-threonylcarbamoyladenosine(37) in tRNA + AMP + H(+)</text>
        <dbReference type="Rhea" id="RHEA:37059"/>
        <dbReference type="Rhea" id="RHEA-COMP:10162"/>
        <dbReference type="Rhea" id="RHEA-COMP:10163"/>
        <dbReference type="ChEBI" id="CHEBI:15378"/>
        <dbReference type="ChEBI" id="CHEBI:73682"/>
        <dbReference type="ChEBI" id="CHEBI:74411"/>
        <dbReference type="ChEBI" id="CHEBI:74418"/>
        <dbReference type="ChEBI" id="CHEBI:456215"/>
        <dbReference type="EC" id="2.3.1.234"/>
    </reaction>
</comment>
<comment type="cofactor">
    <cofactor evidence="1">
        <name>Fe(2+)</name>
        <dbReference type="ChEBI" id="CHEBI:29033"/>
    </cofactor>
    <text evidence="1">Binds 1 Fe(2+) ion per subunit.</text>
</comment>
<comment type="subcellular location">
    <subcellularLocation>
        <location evidence="1">Cytoplasm</location>
    </subcellularLocation>
</comment>
<comment type="similarity">
    <text evidence="1">Belongs to the KAE1 / TsaD family.</text>
</comment>
<feature type="chain" id="PRO_0000303314" description="tRNA N6-adenosine threonylcarbamoyltransferase">
    <location>
        <begin position="1"/>
        <end position="367"/>
    </location>
</feature>
<feature type="binding site" evidence="1">
    <location>
        <position position="123"/>
    </location>
    <ligand>
        <name>Fe cation</name>
        <dbReference type="ChEBI" id="CHEBI:24875"/>
    </ligand>
</feature>
<feature type="binding site" evidence="1">
    <location>
        <position position="127"/>
    </location>
    <ligand>
        <name>Fe cation</name>
        <dbReference type="ChEBI" id="CHEBI:24875"/>
    </ligand>
</feature>
<feature type="binding site" evidence="1">
    <location>
        <begin position="145"/>
        <end position="149"/>
    </location>
    <ligand>
        <name>substrate</name>
    </ligand>
</feature>
<feature type="binding site" evidence="1">
    <location>
        <position position="178"/>
    </location>
    <ligand>
        <name>substrate</name>
    </ligand>
</feature>
<feature type="binding site" evidence="1">
    <location>
        <position position="191"/>
    </location>
    <ligand>
        <name>substrate</name>
    </ligand>
</feature>
<feature type="binding site" evidence="1">
    <location>
        <position position="288"/>
    </location>
    <ligand>
        <name>substrate</name>
    </ligand>
</feature>
<feature type="binding site" evidence="1">
    <location>
        <position position="316"/>
    </location>
    <ligand>
        <name>Fe cation</name>
        <dbReference type="ChEBI" id="CHEBI:24875"/>
    </ligand>
</feature>
<reference key="1">
    <citation type="journal article" date="2001" name="Proc. Natl. Acad. Sci. U.S.A.">
        <title>Complete genome sequence of Caulobacter crescentus.</title>
        <authorList>
            <person name="Nierman W.C."/>
            <person name="Feldblyum T.V."/>
            <person name="Laub M.T."/>
            <person name="Paulsen I.T."/>
            <person name="Nelson K.E."/>
            <person name="Eisen J.A."/>
            <person name="Heidelberg J.F."/>
            <person name="Alley M.R.K."/>
            <person name="Ohta N."/>
            <person name="Maddock J.R."/>
            <person name="Potocka I."/>
            <person name="Nelson W.C."/>
            <person name="Newton A."/>
            <person name="Stephens C."/>
            <person name="Phadke N.D."/>
            <person name="Ely B."/>
            <person name="DeBoy R.T."/>
            <person name="Dodson R.J."/>
            <person name="Durkin A.S."/>
            <person name="Gwinn M.L."/>
            <person name="Haft D.H."/>
            <person name="Kolonay J.F."/>
            <person name="Smit J."/>
            <person name="Craven M.B."/>
            <person name="Khouri H.M."/>
            <person name="Shetty J."/>
            <person name="Berry K.J."/>
            <person name="Utterback T.R."/>
            <person name="Tran K."/>
            <person name="Wolf A.M."/>
            <person name="Vamathevan J.J."/>
            <person name="Ermolaeva M.D."/>
            <person name="White O."/>
            <person name="Salzberg S.L."/>
            <person name="Venter J.C."/>
            <person name="Shapiro L."/>
            <person name="Fraser C.M."/>
        </authorList>
    </citation>
    <scope>NUCLEOTIDE SEQUENCE [LARGE SCALE GENOMIC DNA]</scope>
    <source>
        <strain>ATCC 19089 / CIP 103742 / CB 15</strain>
    </source>
</reference>
<sequence length="367" mass="37448">MTSPKQSDLLILGLETSCDETAASVVRRAADGTVTVLSSVIGTQFEKHAPFGGVVPEIAARAHVESIDAIAAEAVRAAGVGFGDLDGVAATAGPGLVGGVMVGLAFGKAVALARGAPLVAVNHLEGHAVSARLGADIAYPFLLLLVSGGHCQLLEVSGVGACKRLGTTIDDAAGEAFDKIAKSLGLPYPGGPALEKLAVGGDPTRYALPRALLGRKDCDFSFSGLKTAAARIAETLTTDDARRDLAAGVQAAIARQLSERVDRAMKLYKDSHDPEDLRFVVAGGVAANGAVRAALLADCEKNGFSFAAPPLAYCTDNAAMIALAGAERLALGIFDDLDAIARPRWPLDEAAALANPANAYGRKGAKA</sequence>
<organism>
    <name type="scientific">Caulobacter vibrioides (strain ATCC 19089 / CIP 103742 / CB 15)</name>
    <name type="common">Caulobacter crescentus</name>
    <dbReference type="NCBI Taxonomy" id="190650"/>
    <lineage>
        <taxon>Bacteria</taxon>
        <taxon>Pseudomonadati</taxon>
        <taxon>Pseudomonadota</taxon>
        <taxon>Alphaproteobacteria</taxon>
        <taxon>Caulobacterales</taxon>
        <taxon>Caulobacteraceae</taxon>
        <taxon>Caulobacter</taxon>
    </lineage>
</organism>
<protein>
    <recommendedName>
        <fullName evidence="1">tRNA N6-adenosine threonylcarbamoyltransferase</fullName>
        <ecNumber evidence="1">2.3.1.234</ecNumber>
    </recommendedName>
    <alternativeName>
        <fullName evidence="1">N6-L-threonylcarbamoyladenine synthase</fullName>
        <shortName evidence="1">t(6)A synthase</shortName>
    </alternativeName>
    <alternativeName>
        <fullName evidence="1">t(6)A37 threonylcarbamoyladenosine biosynthesis protein TsaD</fullName>
    </alternativeName>
    <alternativeName>
        <fullName evidence="1">tRNA threonylcarbamoyladenosine biosynthesis protein TsaD</fullName>
    </alternativeName>
</protein>
<name>TSAD_CAUVC</name>
<dbReference type="EC" id="2.3.1.234" evidence="1"/>
<dbReference type="EMBL" id="AE005673">
    <property type="protein sequence ID" value="AAK22058.1"/>
    <property type="molecule type" value="Genomic_DNA"/>
</dbReference>
<dbReference type="PIR" id="F87257">
    <property type="entry name" value="F87257"/>
</dbReference>
<dbReference type="RefSeq" id="NP_418890.1">
    <property type="nucleotide sequence ID" value="NC_002696.2"/>
</dbReference>
<dbReference type="RefSeq" id="WP_010917960.1">
    <property type="nucleotide sequence ID" value="NC_002696.2"/>
</dbReference>
<dbReference type="SMR" id="Q9ABZ9"/>
<dbReference type="STRING" id="190650.CC_0071"/>
<dbReference type="EnsemblBacteria" id="AAK22058">
    <property type="protein sequence ID" value="AAK22058"/>
    <property type="gene ID" value="CC_0071"/>
</dbReference>
<dbReference type="KEGG" id="ccr:CC_0071"/>
<dbReference type="PATRIC" id="fig|190650.5.peg.68"/>
<dbReference type="eggNOG" id="COG0533">
    <property type="taxonomic scope" value="Bacteria"/>
</dbReference>
<dbReference type="HOGENOM" id="CLU_023208_0_2_5"/>
<dbReference type="BioCyc" id="CAULO:CC0071-MONOMER"/>
<dbReference type="Proteomes" id="UP000001816">
    <property type="component" value="Chromosome"/>
</dbReference>
<dbReference type="GO" id="GO:0005737">
    <property type="term" value="C:cytoplasm"/>
    <property type="evidence" value="ECO:0007669"/>
    <property type="project" value="UniProtKB-SubCell"/>
</dbReference>
<dbReference type="GO" id="GO:0005506">
    <property type="term" value="F:iron ion binding"/>
    <property type="evidence" value="ECO:0007669"/>
    <property type="project" value="UniProtKB-UniRule"/>
</dbReference>
<dbReference type="GO" id="GO:0061711">
    <property type="term" value="F:N(6)-L-threonylcarbamoyladenine synthase activity"/>
    <property type="evidence" value="ECO:0007669"/>
    <property type="project" value="UniProtKB-EC"/>
</dbReference>
<dbReference type="GO" id="GO:0002949">
    <property type="term" value="P:tRNA threonylcarbamoyladenosine modification"/>
    <property type="evidence" value="ECO:0007669"/>
    <property type="project" value="UniProtKB-UniRule"/>
</dbReference>
<dbReference type="FunFam" id="3.30.420.40:FF:000012">
    <property type="entry name" value="tRNA N6-adenosine threonylcarbamoyltransferase"/>
    <property type="match status" value="1"/>
</dbReference>
<dbReference type="Gene3D" id="3.30.420.40">
    <property type="match status" value="2"/>
</dbReference>
<dbReference type="HAMAP" id="MF_01445">
    <property type="entry name" value="TsaD"/>
    <property type="match status" value="1"/>
</dbReference>
<dbReference type="InterPro" id="IPR043129">
    <property type="entry name" value="ATPase_NBD"/>
</dbReference>
<dbReference type="InterPro" id="IPR000905">
    <property type="entry name" value="Gcp-like_dom"/>
</dbReference>
<dbReference type="InterPro" id="IPR017861">
    <property type="entry name" value="KAE1/TsaD"/>
</dbReference>
<dbReference type="InterPro" id="IPR022450">
    <property type="entry name" value="TsaD"/>
</dbReference>
<dbReference type="NCBIfam" id="TIGR00329">
    <property type="entry name" value="gcp_kae1"/>
    <property type="match status" value="1"/>
</dbReference>
<dbReference type="NCBIfam" id="TIGR03723">
    <property type="entry name" value="T6A_TsaD_YgjD"/>
    <property type="match status" value="1"/>
</dbReference>
<dbReference type="PANTHER" id="PTHR11735">
    <property type="entry name" value="TRNA N6-ADENOSINE THREONYLCARBAMOYLTRANSFERASE"/>
    <property type="match status" value="1"/>
</dbReference>
<dbReference type="PANTHER" id="PTHR11735:SF6">
    <property type="entry name" value="TRNA N6-ADENOSINE THREONYLCARBAMOYLTRANSFERASE, MITOCHONDRIAL"/>
    <property type="match status" value="1"/>
</dbReference>
<dbReference type="Pfam" id="PF00814">
    <property type="entry name" value="TsaD"/>
    <property type="match status" value="1"/>
</dbReference>
<dbReference type="PRINTS" id="PR00789">
    <property type="entry name" value="OSIALOPTASE"/>
</dbReference>
<dbReference type="SUPFAM" id="SSF53067">
    <property type="entry name" value="Actin-like ATPase domain"/>
    <property type="match status" value="2"/>
</dbReference>
<keyword id="KW-0012">Acyltransferase</keyword>
<keyword id="KW-0963">Cytoplasm</keyword>
<keyword id="KW-0408">Iron</keyword>
<keyword id="KW-0479">Metal-binding</keyword>
<keyword id="KW-1185">Reference proteome</keyword>
<keyword id="KW-0808">Transferase</keyword>
<keyword id="KW-0819">tRNA processing</keyword>
<evidence type="ECO:0000255" key="1">
    <source>
        <dbReference type="HAMAP-Rule" id="MF_01445"/>
    </source>
</evidence>
<gene>
    <name evidence="1" type="primary">tsaD</name>
    <name type="synonym">gcp</name>
    <name type="ordered locus">CC_0071</name>
</gene>
<proteinExistence type="inferred from homology"/>
<accession>Q9ABZ9</accession>